<comment type="function">
    <text evidence="1">Dual-specificity methyltransferase that catalyzes the formation of 5-methyluridine at position 54 (m5U54) in all tRNAs, and that of position 341 (m5U341) in tmRNA (transfer-mRNA).</text>
</comment>
<comment type="catalytic activity">
    <reaction evidence="1">
        <text>uridine(54) in tRNA + S-adenosyl-L-methionine = 5-methyluridine(54) in tRNA + S-adenosyl-L-homocysteine + H(+)</text>
        <dbReference type="Rhea" id="RHEA:42712"/>
        <dbReference type="Rhea" id="RHEA-COMP:10167"/>
        <dbReference type="Rhea" id="RHEA-COMP:10193"/>
        <dbReference type="ChEBI" id="CHEBI:15378"/>
        <dbReference type="ChEBI" id="CHEBI:57856"/>
        <dbReference type="ChEBI" id="CHEBI:59789"/>
        <dbReference type="ChEBI" id="CHEBI:65315"/>
        <dbReference type="ChEBI" id="CHEBI:74447"/>
        <dbReference type="EC" id="2.1.1.35"/>
    </reaction>
</comment>
<comment type="catalytic activity">
    <reaction evidence="1">
        <text>uridine(341) in tmRNA + S-adenosyl-L-methionine = 5-methyluridine(341) in tmRNA + S-adenosyl-L-homocysteine + H(+)</text>
        <dbReference type="Rhea" id="RHEA:43612"/>
        <dbReference type="Rhea" id="RHEA-COMP:10630"/>
        <dbReference type="Rhea" id="RHEA-COMP:10631"/>
        <dbReference type="ChEBI" id="CHEBI:15378"/>
        <dbReference type="ChEBI" id="CHEBI:57856"/>
        <dbReference type="ChEBI" id="CHEBI:59789"/>
        <dbReference type="ChEBI" id="CHEBI:65315"/>
        <dbReference type="ChEBI" id="CHEBI:74447"/>
    </reaction>
</comment>
<comment type="similarity">
    <text evidence="1">Belongs to the class I-like SAM-binding methyltransferase superfamily. RNA M5U methyltransferase family. TrmA subfamily.</text>
</comment>
<accession>A6W3C7</accession>
<evidence type="ECO:0000255" key="1">
    <source>
        <dbReference type="HAMAP-Rule" id="MF_01011"/>
    </source>
</evidence>
<gene>
    <name evidence="1" type="primary">trmA</name>
    <name type="ordered locus">Mmwyl1_4311</name>
</gene>
<sequence>MRPDQIQPEMYEKQLQDKQAELAKLMATLSLPEMEVFASQPTHYRMRAEFRIWHDGDDLYYAMFDSADPRTPIRTDQFLAASRLINELMPKLLDAVRDVPVLRYKLFQVDFLTTTTGEALISLLYHKPIDAEWNAAVQQLNNAFPACHFIGRSRKKKQIITRDFVMETLTVNGQKFHYQQVENSFTQPNAGISEKMLEWALDVTKEASGDLLEMYCGNGNFSIPLARRFDRVVATEISKVSVNSAQLNIAINGMHNVQVVKMASEDVSAALNGDVELPKSLVQAGVSELTPSVVLVDPPRAGLDDATVELIRKIDSILYISCNPETLKANLEALSNTHEVVRYAMFDQFPYTHHVETGVFLRRKAS</sequence>
<dbReference type="EC" id="2.1.1.-" evidence="1"/>
<dbReference type="EC" id="2.1.1.35" evidence="1"/>
<dbReference type="EMBL" id="CP000749">
    <property type="protein sequence ID" value="ABR73206.1"/>
    <property type="molecule type" value="Genomic_DNA"/>
</dbReference>
<dbReference type="SMR" id="A6W3C7"/>
<dbReference type="STRING" id="400668.Mmwyl1_4311"/>
<dbReference type="KEGG" id="mmw:Mmwyl1_4311"/>
<dbReference type="eggNOG" id="COG2265">
    <property type="taxonomic scope" value="Bacteria"/>
</dbReference>
<dbReference type="HOGENOM" id="CLU_043022_0_0_6"/>
<dbReference type="OrthoDB" id="9804590at2"/>
<dbReference type="GO" id="GO:0005829">
    <property type="term" value="C:cytosol"/>
    <property type="evidence" value="ECO:0007669"/>
    <property type="project" value="TreeGrafter"/>
</dbReference>
<dbReference type="GO" id="GO:0019843">
    <property type="term" value="F:rRNA binding"/>
    <property type="evidence" value="ECO:0007669"/>
    <property type="project" value="TreeGrafter"/>
</dbReference>
<dbReference type="GO" id="GO:0030697">
    <property type="term" value="F:tRNA (uracil(54)-C5)-methyltransferase activity, S-adenosyl methionine-dependent"/>
    <property type="evidence" value="ECO:0007669"/>
    <property type="project" value="UniProtKB-UniRule"/>
</dbReference>
<dbReference type="GO" id="GO:0000049">
    <property type="term" value="F:tRNA binding"/>
    <property type="evidence" value="ECO:0007669"/>
    <property type="project" value="TreeGrafter"/>
</dbReference>
<dbReference type="GO" id="GO:0030488">
    <property type="term" value="P:tRNA methylation"/>
    <property type="evidence" value="ECO:0007669"/>
    <property type="project" value="UniProtKB-UniRule"/>
</dbReference>
<dbReference type="CDD" id="cd02440">
    <property type="entry name" value="AdoMet_MTases"/>
    <property type="match status" value="1"/>
</dbReference>
<dbReference type="FunFam" id="2.40.50.1070:FF:000001">
    <property type="entry name" value="tRNA/tmRNA (uracil-C(5))-methyltransferase"/>
    <property type="match status" value="1"/>
</dbReference>
<dbReference type="FunFam" id="3.40.50.150:FF:000012">
    <property type="entry name" value="tRNA/tmRNA (uracil-C(5))-methyltransferase"/>
    <property type="match status" value="1"/>
</dbReference>
<dbReference type="Gene3D" id="2.40.50.1070">
    <property type="match status" value="1"/>
</dbReference>
<dbReference type="Gene3D" id="3.40.50.150">
    <property type="entry name" value="Vaccinia Virus protein VP39"/>
    <property type="match status" value="1"/>
</dbReference>
<dbReference type="HAMAP" id="MF_01011">
    <property type="entry name" value="RNA_methyltr_TrmA"/>
    <property type="match status" value="1"/>
</dbReference>
<dbReference type="InterPro" id="IPR030390">
    <property type="entry name" value="MeTrfase_TrmA_AS"/>
</dbReference>
<dbReference type="InterPro" id="IPR030391">
    <property type="entry name" value="MeTrfase_TrmA_CS"/>
</dbReference>
<dbReference type="InterPro" id="IPR029063">
    <property type="entry name" value="SAM-dependent_MTases_sf"/>
</dbReference>
<dbReference type="InterPro" id="IPR011869">
    <property type="entry name" value="TrmA_MeTrfase"/>
</dbReference>
<dbReference type="InterPro" id="IPR010280">
    <property type="entry name" value="U5_MeTrfase_fam"/>
</dbReference>
<dbReference type="NCBIfam" id="TIGR02143">
    <property type="entry name" value="trmA_only"/>
    <property type="match status" value="1"/>
</dbReference>
<dbReference type="PANTHER" id="PTHR47790">
    <property type="entry name" value="TRNA/TMRNA (URACIL-C(5))-METHYLTRANSFERASE"/>
    <property type="match status" value="1"/>
</dbReference>
<dbReference type="PANTHER" id="PTHR47790:SF2">
    <property type="entry name" value="TRNA_TMRNA (URACIL-C(5))-METHYLTRANSFERASE"/>
    <property type="match status" value="1"/>
</dbReference>
<dbReference type="Pfam" id="PF05958">
    <property type="entry name" value="tRNA_U5-meth_tr"/>
    <property type="match status" value="1"/>
</dbReference>
<dbReference type="SUPFAM" id="SSF53335">
    <property type="entry name" value="S-adenosyl-L-methionine-dependent methyltransferases"/>
    <property type="match status" value="1"/>
</dbReference>
<dbReference type="PROSITE" id="PS51687">
    <property type="entry name" value="SAM_MT_RNA_M5U"/>
    <property type="match status" value="1"/>
</dbReference>
<dbReference type="PROSITE" id="PS01230">
    <property type="entry name" value="TRMA_1"/>
    <property type="match status" value="1"/>
</dbReference>
<dbReference type="PROSITE" id="PS01231">
    <property type="entry name" value="TRMA_2"/>
    <property type="match status" value="1"/>
</dbReference>
<keyword id="KW-0489">Methyltransferase</keyword>
<keyword id="KW-0949">S-adenosyl-L-methionine</keyword>
<keyword id="KW-0808">Transferase</keyword>
<keyword id="KW-0819">tRNA processing</keyword>
<reference key="1">
    <citation type="submission" date="2007-06" db="EMBL/GenBank/DDBJ databases">
        <title>Complete sequence of Marinomonas sp. MWYL1.</title>
        <authorList>
            <consortium name="US DOE Joint Genome Institute"/>
            <person name="Copeland A."/>
            <person name="Lucas S."/>
            <person name="Lapidus A."/>
            <person name="Barry K."/>
            <person name="Glavina del Rio T."/>
            <person name="Dalin E."/>
            <person name="Tice H."/>
            <person name="Pitluck S."/>
            <person name="Kiss H."/>
            <person name="Brettin T."/>
            <person name="Bruce D."/>
            <person name="Detter J.C."/>
            <person name="Han C."/>
            <person name="Schmutz J."/>
            <person name="Larimer F."/>
            <person name="Land M."/>
            <person name="Hauser L."/>
            <person name="Kyrpides N."/>
            <person name="Kim E."/>
            <person name="Johnston A.W.B."/>
            <person name="Todd J.D."/>
            <person name="Rogers R."/>
            <person name="Wexler M."/>
            <person name="Bond P.L."/>
            <person name="Li Y."/>
            <person name="Richardson P."/>
        </authorList>
    </citation>
    <scope>NUCLEOTIDE SEQUENCE [LARGE SCALE GENOMIC DNA]</scope>
    <source>
        <strain>MWYL1</strain>
    </source>
</reference>
<proteinExistence type="inferred from homology"/>
<feature type="chain" id="PRO_1000084037" description="tRNA/tmRNA (uracil-C(5))-methyltransferase">
    <location>
        <begin position="1"/>
        <end position="366"/>
    </location>
</feature>
<feature type="active site" description="Nucleophile" evidence="1">
    <location>
        <position position="322"/>
    </location>
</feature>
<feature type="active site" description="Proton acceptor" evidence="1">
    <location>
        <position position="356"/>
    </location>
</feature>
<feature type="binding site" evidence="1">
    <location>
        <position position="187"/>
    </location>
    <ligand>
        <name>S-adenosyl-L-methionine</name>
        <dbReference type="ChEBI" id="CHEBI:59789"/>
    </ligand>
</feature>
<feature type="binding site" evidence="1">
    <location>
        <position position="215"/>
    </location>
    <ligand>
        <name>S-adenosyl-L-methionine</name>
        <dbReference type="ChEBI" id="CHEBI:59789"/>
    </ligand>
</feature>
<feature type="binding site" evidence="1">
    <location>
        <position position="220"/>
    </location>
    <ligand>
        <name>S-adenosyl-L-methionine</name>
        <dbReference type="ChEBI" id="CHEBI:59789"/>
    </ligand>
</feature>
<feature type="binding site" evidence="1">
    <location>
        <position position="236"/>
    </location>
    <ligand>
        <name>S-adenosyl-L-methionine</name>
        <dbReference type="ChEBI" id="CHEBI:59789"/>
    </ligand>
</feature>
<feature type="binding site" evidence="1">
    <location>
        <position position="297"/>
    </location>
    <ligand>
        <name>S-adenosyl-L-methionine</name>
        <dbReference type="ChEBI" id="CHEBI:59789"/>
    </ligand>
</feature>
<organism>
    <name type="scientific">Marinomonas sp. (strain MWYL1)</name>
    <dbReference type="NCBI Taxonomy" id="400668"/>
    <lineage>
        <taxon>Bacteria</taxon>
        <taxon>Pseudomonadati</taxon>
        <taxon>Pseudomonadota</taxon>
        <taxon>Gammaproteobacteria</taxon>
        <taxon>Oceanospirillales</taxon>
        <taxon>Oceanospirillaceae</taxon>
        <taxon>Marinomonas</taxon>
    </lineage>
</organism>
<name>TRMA_MARMS</name>
<protein>
    <recommendedName>
        <fullName evidence="1">tRNA/tmRNA (uracil-C(5))-methyltransferase</fullName>
        <ecNumber evidence="1">2.1.1.-</ecNumber>
        <ecNumber evidence="1">2.1.1.35</ecNumber>
    </recommendedName>
    <alternativeName>
        <fullName evidence="1">tRNA (uracil(54)-C(5))-methyltransferase</fullName>
    </alternativeName>
    <alternativeName>
        <fullName evidence="1">tRNA(m5U54)-methyltransferase</fullName>
        <shortName evidence="1">RUMT</shortName>
    </alternativeName>
    <alternativeName>
        <fullName evidence="1">tmRNA (uracil(341)-C(5))-methyltransferase</fullName>
    </alternativeName>
</protein>